<comment type="function">
    <text evidence="3">Non-canonical nonribosomal peptide synthetase; part of the lnb gene cluster that mediates the biosynthesis of diastereomeric piperazines. Lna and lnb clusters encode sets of enzymes that produce overlapping sets of previously undescribed metabolites such as piperazinomycin-like metabolites or morpholine (PubMed:23281040). The lna and lnb biosynthetic pathways appear to be part of a signaling network that controls the formation of sclerotia, a resilient overwintering structure (PubMed:23281040). One primary function of the non-canonical nonribosomal peptide synthetases lnaA and lnbA consists in the reduction of L-tyrosine (PubMed:23281040). The presence in the clusters of tailoring enzymes such as the oxidoreductases lnaB, lnbB, lnaE or lnbE, as well as of the cytochrome P450 monooxygenases lnaC, lnaD, or lnbC, might explain formation of various diastereomeric piperazines (PubMed:23281040).</text>
</comment>
<comment type="catalytic activity">
    <reaction evidence="3">
        <text>L-tyrosinal + AMP + diphosphate + NADP(+) = L-tyrosine + ATP + NADPH + H(+)</text>
        <dbReference type="Rhea" id="RHEA:57412"/>
        <dbReference type="ChEBI" id="CHEBI:15378"/>
        <dbReference type="ChEBI" id="CHEBI:30616"/>
        <dbReference type="ChEBI" id="CHEBI:33019"/>
        <dbReference type="ChEBI" id="CHEBI:57783"/>
        <dbReference type="ChEBI" id="CHEBI:58315"/>
        <dbReference type="ChEBI" id="CHEBI:58349"/>
        <dbReference type="ChEBI" id="CHEBI:141668"/>
        <dbReference type="ChEBI" id="CHEBI:456215"/>
        <dbReference type="EC" id="1.2.1.101"/>
    </reaction>
    <physiologicalReaction direction="right-to-left" evidence="3">
        <dbReference type="Rhea" id="RHEA:57414"/>
    </physiologicalReaction>
</comment>
<comment type="pathway">
    <text evidence="3">Secondary metabolite biosynthesis.</text>
</comment>
<comment type="domain">
    <text evidence="6">NRP synthetases are composed of discrete domains (adenylation (A), thiolation (T) or peptidyl carrier protein (PCP) and condensation (C) domains) which when grouped together are referred to as a single module. Each module is responsible for the recognition (via the A domain) and incorporation of a single amino acid into the growing peptide product. Thus, an NRP synthetase is generally composed of one or more modules and can terminate in a thioesterase domain (TE) that releases the newly synthesized peptide from the enzyme. Occasionally, epimerase (E) domains (responsible for L- to D-amino acid conversion) are present within the NRP synthetase. LnaA contains an amino acid adenylation domain (A), a peptidyl carrier protein (PCP) domain with a phosphopantetheine prosthetic group, and a short-chain dehydrogenase/reductase terminus (R), but it does not have an identifiable condensation (C) domain required for the formation of peptide bonds during non-ribosomal peptide synthesis.</text>
</comment>
<comment type="disruption phenotype">
    <text evidence="3">Abolishes the production of piperazines and suppresses the formation of sclerotia when lnbA is also disrupted.</text>
</comment>
<comment type="similarity">
    <text evidence="5">Belongs to the NRP synthetase family.</text>
</comment>
<dbReference type="EC" id="1.2.1.101" evidence="3"/>
<dbReference type="EMBL" id="EQ963485">
    <property type="protein sequence ID" value="EED45923.1"/>
    <property type="molecule type" value="Genomic_DNA"/>
</dbReference>
<dbReference type="RefSeq" id="XP_002384859.1">
    <property type="nucleotide sequence ID" value="XM_002384818.1"/>
</dbReference>
<dbReference type="SMR" id="B8NWW5"/>
<dbReference type="STRING" id="332952.B8NWW5"/>
<dbReference type="EnsemblFungi" id="EED45923">
    <property type="protein sequence ID" value="EED45923"/>
    <property type="gene ID" value="AFLA_121520"/>
</dbReference>
<dbReference type="VEuPathDB" id="FungiDB:AFLA_014155"/>
<dbReference type="eggNOG" id="KOG1178">
    <property type="taxonomic scope" value="Eukaryota"/>
</dbReference>
<dbReference type="HOGENOM" id="CLU_000022_2_17_1"/>
<dbReference type="OMA" id="YMIPQLQ"/>
<dbReference type="GO" id="GO:0016874">
    <property type="term" value="F:ligase activity"/>
    <property type="evidence" value="ECO:0007669"/>
    <property type="project" value="UniProtKB-KW"/>
</dbReference>
<dbReference type="GO" id="GO:0016491">
    <property type="term" value="F:oxidoreductase activity"/>
    <property type="evidence" value="ECO:0007669"/>
    <property type="project" value="UniProtKB-KW"/>
</dbReference>
<dbReference type="CDD" id="cd05930">
    <property type="entry name" value="A_NRPS"/>
    <property type="match status" value="1"/>
</dbReference>
<dbReference type="CDD" id="cd05235">
    <property type="entry name" value="SDR_e1"/>
    <property type="match status" value="1"/>
</dbReference>
<dbReference type="Gene3D" id="3.30.300.30">
    <property type="match status" value="1"/>
</dbReference>
<dbReference type="Gene3D" id="1.10.1200.10">
    <property type="entry name" value="ACP-like"/>
    <property type="match status" value="1"/>
</dbReference>
<dbReference type="Gene3D" id="3.40.50.12780">
    <property type="entry name" value="N-terminal domain of ligase-like"/>
    <property type="match status" value="1"/>
</dbReference>
<dbReference type="Gene3D" id="3.40.50.720">
    <property type="entry name" value="NAD(P)-binding Rossmann-like Domain"/>
    <property type="match status" value="1"/>
</dbReference>
<dbReference type="InterPro" id="IPR036736">
    <property type="entry name" value="ACP-like_sf"/>
</dbReference>
<dbReference type="InterPro" id="IPR045851">
    <property type="entry name" value="AMP-bd_C_sf"/>
</dbReference>
<dbReference type="InterPro" id="IPR020845">
    <property type="entry name" value="AMP-binding_CS"/>
</dbReference>
<dbReference type="InterPro" id="IPR000873">
    <property type="entry name" value="AMP-dep_synth/lig_dom"/>
</dbReference>
<dbReference type="InterPro" id="IPR042099">
    <property type="entry name" value="ANL_N_sf"/>
</dbReference>
<dbReference type="InterPro" id="IPR013120">
    <property type="entry name" value="Far_NAD-bd"/>
</dbReference>
<dbReference type="InterPro" id="IPR036291">
    <property type="entry name" value="NAD(P)-bd_dom_sf"/>
</dbReference>
<dbReference type="InterPro" id="IPR009081">
    <property type="entry name" value="PP-bd_ACP"/>
</dbReference>
<dbReference type="InterPro" id="IPR010080">
    <property type="entry name" value="Thioester_reductase-like_dom"/>
</dbReference>
<dbReference type="NCBIfam" id="TIGR01746">
    <property type="entry name" value="Thioester-redct"/>
    <property type="match status" value="1"/>
</dbReference>
<dbReference type="PANTHER" id="PTHR44845:SF6">
    <property type="entry name" value="BETA-ALANINE-ACTIVATING ENZYME"/>
    <property type="match status" value="1"/>
</dbReference>
<dbReference type="PANTHER" id="PTHR44845">
    <property type="entry name" value="CARRIER DOMAIN-CONTAINING PROTEIN"/>
    <property type="match status" value="1"/>
</dbReference>
<dbReference type="Pfam" id="PF00501">
    <property type="entry name" value="AMP-binding"/>
    <property type="match status" value="1"/>
</dbReference>
<dbReference type="Pfam" id="PF07993">
    <property type="entry name" value="NAD_binding_4"/>
    <property type="match status" value="1"/>
</dbReference>
<dbReference type="Pfam" id="PF00550">
    <property type="entry name" value="PP-binding"/>
    <property type="match status" value="1"/>
</dbReference>
<dbReference type="SUPFAM" id="SSF56801">
    <property type="entry name" value="Acetyl-CoA synthetase-like"/>
    <property type="match status" value="1"/>
</dbReference>
<dbReference type="SUPFAM" id="SSF47336">
    <property type="entry name" value="ACP-like"/>
    <property type="match status" value="1"/>
</dbReference>
<dbReference type="SUPFAM" id="SSF51735">
    <property type="entry name" value="NAD(P)-binding Rossmann-fold domains"/>
    <property type="match status" value="1"/>
</dbReference>
<dbReference type="PROSITE" id="PS00455">
    <property type="entry name" value="AMP_BINDING"/>
    <property type="match status" value="1"/>
</dbReference>
<dbReference type="PROSITE" id="PS50075">
    <property type="entry name" value="CARRIER"/>
    <property type="match status" value="1"/>
</dbReference>
<proteinExistence type="inferred from homology"/>
<organism>
    <name type="scientific">Aspergillus flavus (strain ATCC 200026 / FGSC A1120 / IAM 13836 / NRRL 3357 / JCM 12722 / SRRC 167)</name>
    <dbReference type="NCBI Taxonomy" id="332952"/>
    <lineage>
        <taxon>Eukaryota</taxon>
        <taxon>Fungi</taxon>
        <taxon>Dikarya</taxon>
        <taxon>Ascomycota</taxon>
        <taxon>Pezizomycotina</taxon>
        <taxon>Eurotiomycetes</taxon>
        <taxon>Eurotiomycetidae</taxon>
        <taxon>Eurotiales</taxon>
        <taxon>Aspergillaceae</taxon>
        <taxon>Aspergillus</taxon>
        <taxon>Aspergillus subgen. Circumdati</taxon>
    </lineage>
</organism>
<keyword id="KW-0436">Ligase</keyword>
<keyword id="KW-0511">Multifunctional enzyme</keyword>
<keyword id="KW-0560">Oxidoreductase</keyword>
<keyword id="KW-0596">Phosphopantetheine</keyword>
<keyword id="KW-0597">Phosphoprotein</keyword>
<accession>B8NWW5</accession>
<sequence>MMLSNLLPSPEPLGADEYGLCVASNLGLGQLFYRQVRQSPSSIAVVDDESSITYGQLHAWAVRLAAKLSQEGFVKEEAVGIVVQHGVADVVAQMAVIYAGGSCAPMDPTMRDQQIGQRLQRLNSRFILVDQSNRGRDLQFQQIVLEKHLPLTITDLCEENEFPVTTDLSHRTHLIHTSGTTSEPKAVQIAARSILQVVFHAPFEPLAVEDVVAHANNSSFDVSLFDIWAPLLRGARIAILKKMVLLDLVVLAEHIDRLGITVMATTTALLNLAASTLPTAFSKLRICFIGGEAANVSAIETVLRKGPPKMLINAYGPTECCIFCLAHRVTPKDIQMGSVSIGMPIGHTIAYIADESGCAANEGELWIGGAGVSPGYINEPEKNAKSFPTIMMPSGEAARFYRTGDIVRRRDDGQIDYVGRVDHQIKVRGFRIELEAIETSLLQTGLFAEVAAMGIQSPHQGAGSVLVAYATPKDPAHPPEISKALKILQDILPEYMIPQLQLIEKMPLNSHAKVDRKGLKQLFCQRSTSLLKPVPKLPNTLCQDTQTVLASLWATILATPKSEYKESDDFFVLGGTSLQASLLISQIRQVFRCEVSLLALYDNSTVGALASIIDHAKGGHLKTVRDEREVWLADTKLADDLPAPMTTPVNWQRDIEGRIFITGATGFVGAFLLSDLLHMPSVHQIGCLVRAPNSAAGMQRLRLALEKYNLWKDEFTNKLLAFPGLLEDKYLGLEQARFNELANWASVVFHLGARVNYTQPYSLHRPANTLGTINVVRFACTGRSKAVHYVSSISCFGPTGFFTGTASVGEDDSLLPHLEALPYDHGYAQSQWVADQLLRRLMDRGFPISIYRPGFITGHSQTGVCNPDDFFSRLMIACEQMKSYPMLPNQRKEFVPVDYVNSVILHIAASEHAVGRAYHIVPPNRDMSIDMDATMDLLGDAVNSRIHALPYMEWIDRLAANPPVALQPLQPMLAEKVHDANYPGGLKFPTLDCSLLKKYIAHLRSAC</sequence>
<gene>
    <name evidence="4" type="primary">lnaA</name>
    <name type="ORF">AFLA_121520</name>
</gene>
<feature type="chain" id="PRO_0000446075" description="Aldehyde reductase lnbA">
    <location>
        <begin position="1"/>
        <end position="1007"/>
    </location>
</feature>
<feature type="domain" description="Carrier" evidence="2">
    <location>
        <begin position="540"/>
        <end position="617"/>
    </location>
</feature>
<feature type="region of interest" description="Adenylation (A) domain" evidence="1 6">
    <location>
        <begin position="35"/>
        <end position="428"/>
    </location>
</feature>
<feature type="region of interest" description="Short-chain dehydrogenase/reductase (R) domain" evidence="1 6">
    <location>
        <begin position="659"/>
        <end position="998"/>
    </location>
</feature>
<feature type="modified residue" description="O-(pantetheine 4'-phosphoryl)serine" evidence="2">
    <location>
        <position position="577"/>
    </location>
</feature>
<name>LNBA_ASPFN</name>
<reference key="1">
    <citation type="journal article" date="2015" name="Genome Announc.">
        <title>Genome sequence of Aspergillus flavus NRRL 3357, a strain that causes aflatoxin contamination of food and feed.</title>
        <authorList>
            <person name="Nierman W.C."/>
            <person name="Yu J."/>
            <person name="Fedorova-Abrams N.D."/>
            <person name="Losada L."/>
            <person name="Cleveland T.E."/>
            <person name="Bhatnagar D."/>
            <person name="Bennett J.W."/>
            <person name="Dean R."/>
            <person name="Payne G.A."/>
        </authorList>
    </citation>
    <scope>NUCLEOTIDE SEQUENCE [LARGE SCALE GENOMIC DNA]</scope>
    <source>
        <strain>ATCC 200026 / FGSC A1120 / IAM 13836 / NRRL 3357 / JCM 12722 / SRRC 167</strain>
    </source>
</reference>
<reference key="2">
    <citation type="journal article" date="2013" name="Angew. Chem. Int. Ed.">
        <title>Homologous NRPS-like gene clusters mediate redundant small-molecule biosynthesis in Aspergillus flavus.</title>
        <authorList>
            <person name="Forseth R.R."/>
            <person name="Amaike S."/>
            <person name="Schwenk D."/>
            <person name="Affeldt K.J."/>
            <person name="Hoffmeister D."/>
            <person name="Schroeder F.C."/>
            <person name="Keller N.P."/>
        </authorList>
    </citation>
    <scope>IDENTIFICATION</scope>
    <scope>FUNCTION</scope>
    <scope>SUBSTRATE SPECIFICITY</scope>
    <scope>DOMAIN</scope>
    <scope>DISRUPTION PHENOTYPE</scope>
    <scope>PATHWAY</scope>
</reference>
<protein>
    <recommendedName>
        <fullName evidence="4">Aldehyde reductase lnbA</fullName>
        <ecNumber evidence="3">1.2.1.101</ecNumber>
    </recommendedName>
    <alternativeName>
        <fullName evidence="4">Lnb diastereomeric piperazines biosynthesis cluster protein A</fullName>
    </alternativeName>
    <alternativeName>
        <fullName evidence="4">Non-canonical nonribosomal peptide synthetase lnbA</fullName>
    </alternativeName>
</protein>
<evidence type="ECO:0000255" key="1"/>
<evidence type="ECO:0000255" key="2">
    <source>
        <dbReference type="PROSITE-ProRule" id="PRU00258"/>
    </source>
</evidence>
<evidence type="ECO:0000269" key="3">
    <source>
    </source>
</evidence>
<evidence type="ECO:0000303" key="4">
    <source>
    </source>
</evidence>
<evidence type="ECO:0000305" key="5"/>
<evidence type="ECO:0000305" key="6">
    <source>
    </source>
</evidence>